<evidence type="ECO:0000250" key="1"/>
<evidence type="ECO:0000250" key="2">
    <source>
        <dbReference type="UniProtKB" id="P51636"/>
    </source>
</evidence>
<evidence type="ECO:0000250" key="3">
    <source>
        <dbReference type="UniProtKB" id="Q9WVC3"/>
    </source>
</evidence>
<evidence type="ECO:0000255" key="4"/>
<evidence type="ECO:0000305" key="5"/>
<organism>
    <name type="scientific">Callithrix jacchus</name>
    <name type="common">White-tufted-ear marmoset</name>
    <dbReference type="NCBI Taxonomy" id="9483"/>
    <lineage>
        <taxon>Eukaryota</taxon>
        <taxon>Metazoa</taxon>
        <taxon>Chordata</taxon>
        <taxon>Craniata</taxon>
        <taxon>Vertebrata</taxon>
        <taxon>Euteleostomi</taxon>
        <taxon>Mammalia</taxon>
        <taxon>Eutheria</taxon>
        <taxon>Euarchontoglires</taxon>
        <taxon>Primates</taxon>
        <taxon>Haplorrhini</taxon>
        <taxon>Platyrrhini</taxon>
        <taxon>Cebidae</taxon>
        <taxon>Callitrichinae</taxon>
        <taxon>Callithrix</taxon>
        <taxon>Callithrix</taxon>
    </lineage>
</organism>
<protein>
    <recommendedName>
        <fullName>Caveolin-2</fullName>
    </recommendedName>
</protein>
<proteinExistence type="inferred from homology"/>
<sequence>MGLETEKADVQLFMDDDSYSHHSGLEYADPEKFVDSGQDRDPHRLNSHLKLGFEDVIAEPVTTHSFDKVWICSHALFEISKYVMYKFLTVFLAIPLAFLAGILFATLSCLHIWIIMPFVKTCLMVLPSVQTIWKSVTDAIIAPLCTSIGRSFSSVSLQLSQD</sequence>
<name>CAV2_CALJA</name>
<gene>
    <name type="primary">CAV2</name>
</gene>
<keyword id="KW-1003">Cell membrane</keyword>
<keyword id="KW-0963">Cytoplasm</keyword>
<keyword id="KW-0333">Golgi apparatus</keyword>
<keyword id="KW-0472">Membrane</keyword>
<keyword id="KW-0539">Nucleus</keyword>
<keyword id="KW-0597">Phosphoprotein</keyword>
<keyword id="KW-1185">Reference proteome</keyword>
<feature type="chain" id="PRO_0000226337" description="Caveolin-2">
    <location>
        <begin position="1"/>
        <end position="162"/>
    </location>
</feature>
<feature type="topological domain" description="Cytoplasmic" evidence="4">
    <location>
        <begin position="1"/>
        <end position="86"/>
    </location>
</feature>
<feature type="intramembrane region" description="Helical" evidence="4">
    <location>
        <begin position="87"/>
        <end position="107"/>
    </location>
</feature>
<feature type="topological domain" description="Cytoplasmic" evidence="4">
    <location>
        <begin position="108"/>
        <end position="162"/>
    </location>
</feature>
<feature type="modified residue" description="Phosphotyrosine; by SRC" evidence="2">
    <location>
        <position position="19"/>
    </location>
</feature>
<feature type="modified residue" description="Phosphoserine" evidence="3">
    <location>
        <position position="20"/>
    </location>
</feature>
<feature type="modified residue" description="Phosphoserine" evidence="2">
    <location>
        <position position="23"/>
    </location>
</feature>
<feature type="modified residue" description="Phosphotyrosine; by SRC" evidence="2">
    <location>
        <position position="27"/>
    </location>
</feature>
<feature type="modified residue" description="Phosphoserine" evidence="2">
    <location>
        <position position="36"/>
    </location>
</feature>
<comment type="function">
    <text evidence="1">May act as a scaffolding protein within caveolar membranes. Interacts directly with G-protein alpha subunits and can functionally regulate their activity. Acts as an accessory protein in conjunction with CAV1 in targeting to lipid rafts and driving caveolae formation. The Ser-36 phosphorylated form has a role in modulating mitosis in endothelial cells. Positive regulator of cellular mitogenesis of the MAPK signaling pathway. Required for the insulin-stimulated nuclear translocation and activation of MAPK1 and STAT3, and the subsequent regulation of cell cycle progression (By similarity).</text>
</comment>
<comment type="subunit">
    <text evidence="1">Monomer or homodimer (By similarity). Interacts with CAV1; the interaction forms a stable heterooligomeric complex that is required for targeting to lipid rafts and for caveolae formation. Tyrosine phosphorylated forms do not form heterooligomers with the Tyr-19-phosphorylated form existing as a monomer or dimer, and the Tyr-27-form as a monomer only. Interacts (tyrosine phosphorylated form) with the SH2 domain-containing proteins, RASA1, NCK1 and SRC. Interacts (tyrosine phosphorylated form) with INSR, the interaction (Tyr-27-phosphorylated form) is increased on insulin stimulation. Interacts (Tyr-19 phosphorylated form) with MAPK1 (phosphorylated form); the interaction, promoted by insulin, leads to nuclear location and MAPK1 activation. Interacts with STAT3; the interaction is increased on insulin-induced tyrosine phosphorylation leading to STAT activation (By similarity).</text>
</comment>
<comment type="subcellular location">
    <subcellularLocation>
        <location evidence="1">Nucleus</location>
    </subcellularLocation>
    <subcellularLocation>
        <location evidence="1">Cytoplasm</location>
    </subcellularLocation>
    <subcellularLocation>
        <location>Golgi apparatus membrane</location>
        <topology>Peripheral membrane protein</topology>
    </subcellularLocation>
    <subcellularLocation>
        <location>Cell membrane</location>
        <topology>Peripheral membrane protein</topology>
    </subcellularLocation>
    <subcellularLocation>
        <location>Membrane</location>
        <location>Caveola</location>
        <topology>Peripheral membrane protein</topology>
    </subcellularLocation>
    <text evidence="1">Potential hairpin-like structure in the membrane. Membrane protein of caveolae. Tyr-19-phosphorylated form is enriched at sites of cell-cell contact and is translocated to the nucleus in complex with MAPK1 in response to insulin (By similarity). Tyr-27-phosphorylated form is located both in the cytoplasm and plasma membrane. CAV1-mediated Ser-23-phosphorylated form locates to the plasma membrane. Ser-36-phosphorylated form resides in intracellular compartments.</text>
</comment>
<comment type="PTM">
    <text evidence="1">Phosphorylated on serine and tyrosine residues. CAV1 promotes phosphorylation on Ser-23 which then targets the complex to the plasma membrane, lipid rafts and caveolae. Phosphorylation on Ser-36 appears to modulate mitosis in endothelial cells (By similarity). Phosphorylation on both Tyr-19 and Tyr-27 is required for insulin-induced 'Ser-727' phosphorylation of STAT3 and its activation. Phosphorylation on Tyr-19 is required for insulin-induced phosphorylation of MAPK1 and DNA binding of STAT3. Tyrosine phosphorylation is induced by both EGF and insulin (By. similarity).</text>
</comment>
<comment type="similarity">
    <text evidence="5">Belongs to the caveolin family.</text>
</comment>
<accession>Q2QLG7</accession>
<reference key="1">
    <citation type="submission" date="2005-10" db="EMBL/GenBank/DDBJ databases">
        <title>NISC comparative sequencing initiative.</title>
        <authorList>
            <person name="Antonellis A."/>
            <person name="Ayele K."/>
            <person name="Benjamin B."/>
            <person name="Blakesley R.W."/>
            <person name="Boakye A."/>
            <person name="Bouffard G.G."/>
            <person name="Brinkley C."/>
            <person name="Brooks S."/>
            <person name="Chu G."/>
            <person name="Coleman H."/>
            <person name="Engle J."/>
            <person name="Gestole M."/>
            <person name="Greene A."/>
            <person name="Guan X."/>
            <person name="Gupta J."/>
            <person name="Haghighi P."/>
            <person name="Han J."/>
            <person name="Hansen N."/>
            <person name="Ho S.-L."/>
            <person name="Hu P."/>
            <person name="Hunter G."/>
            <person name="Hurle B."/>
            <person name="Idol J.R."/>
            <person name="Kwong P."/>
            <person name="Laric P."/>
            <person name="Larson S."/>
            <person name="Lee-Lin S.-Q."/>
            <person name="Legaspi R."/>
            <person name="Madden M."/>
            <person name="Maduro Q.L."/>
            <person name="Maduro V.B."/>
            <person name="Margulies E.H."/>
            <person name="Masiello C."/>
            <person name="Maskeri B."/>
            <person name="McDowell J."/>
            <person name="Mojidi H.A."/>
            <person name="Mullikin J.C."/>
            <person name="Oestreicher J.S."/>
            <person name="Park M."/>
            <person name="Portnoy M.E."/>
            <person name="Prasad A."/>
            <person name="Puri O."/>
            <person name="Reddix-Dugue N."/>
            <person name="Schandler K."/>
            <person name="Schueler M.G."/>
            <person name="Sison C."/>
            <person name="Stantripop S."/>
            <person name="Stephen E."/>
            <person name="Taye A."/>
            <person name="Thomas J.W."/>
            <person name="Thomas P.J."/>
            <person name="Tsipouri V."/>
            <person name="Ung L."/>
            <person name="Vogt J.L."/>
            <person name="Wetherby K.D."/>
            <person name="Young A."/>
            <person name="Green E.D."/>
        </authorList>
    </citation>
    <scope>NUCLEOTIDE SEQUENCE [LARGE SCALE GENOMIC DNA]</scope>
</reference>
<dbReference type="EMBL" id="DP000014">
    <property type="protein sequence ID" value="ABA90389.1"/>
    <property type="molecule type" value="Genomic_DNA"/>
</dbReference>
<dbReference type="SMR" id="Q2QLG7"/>
<dbReference type="FunCoup" id="Q2QLG7">
    <property type="interactions" value="872"/>
</dbReference>
<dbReference type="STRING" id="9483.ENSCJAP00000009462"/>
<dbReference type="eggNOG" id="ENOG502RZYX">
    <property type="taxonomic scope" value="Eukaryota"/>
</dbReference>
<dbReference type="InParanoid" id="Q2QLG7"/>
<dbReference type="Proteomes" id="UP000008225">
    <property type="component" value="Unplaced"/>
</dbReference>
<dbReference type="GO" id="GO:0005901">
    <property type="term" value="C:caveola"/>
    <property type="evidence" value="ECO:0000250"/>
    <property type="project" value="UniProtKB"/>
</dbReference>
<dbReference type="GO" id="GO:0031410">
    <property type="term" value="C:cytoplasmic vesicle"/>
    <property type="evidence" value="ECO:0007669"/>
    <property type="project" value="TreeGrafter"/>
</dbReference>
<dbReference type="GO" id="GO:0005925">
    <property type="term" value="C:focal adhesion"/>
    <property type="evidence" value="ECO:0007669"/>
    <property type="project" value="TreeGrafter"/>
</dbReference>
<dbReference type="GO" id="GO:0000139">
    <property type="term" value="C:Golgi membrane"/>
    <property type="evidence" value="ECO:0007669"/>
    <property type="project" value="UniProtKB-SubCell"/>
</dbReference>
<dbReference type="GO" id="GO:0005634">
    <property type="term" value="C:nucleus"/>
    <property type="evidence" value="ECO:0007669"/>
    <property type="project" value="UniProtKB-SubCell"/>
</dbReference>
<dbReference type="GO" id="GO:0048471">
    <property type="term" value="C:perinuclear region of cytoplasm"/>
    <property type="evidence" value="ECO:0000250"/>
    <property type="project" value="UniProtKB"/>
</dbReference>
<dbReference type="GO" id="GO:0044853">
    <property type="term" value="C:plasma membrane raft"/>
    <property type="evidence" value="ECO:0000250"/>
    <property type="project" value="UniProtKB"/>
</dbReference>
<dbReference type="GO" id="GO:0042383">
    <property type="term" value="C:sarcolemma"/>
    <property type="evidence" value="ECO:0007669"/>
    <property type="project" value="TreeGrafter"/>
</dbReference>
<dbReference type="GO" id="GO:0031748">
    <property type="term" value="F:D1 dopamine receptor binding"/>
    <property type="evidence" value="ECO:0000250"/>
    <property type="project" value="UniProtKB"/>
</dbReference>
<dbReference type="GO" id="GO:0060090">
    <property type="term" value="F:molecular adaptor activity"/>
    <property type="evidence" value="ECO:0007669"/>
    <property type="project" value="TreeGrafter"/>
</dbReference>
<dbReference type="GO" id="GO:0019901">
    <property type="term" value="F:protein kinase binding"/>
    <property type="evidence" value="ECO:0007669"/>
    <property type="project" value="TreeGrafter"/>
</dbReference>
<dbReference type="GO" id="GO:0070836">
    <property type="term" value="P:caveola assembly"/>
    <property type="evidence" value="ECO:0000250"/>
    <property type="project" value="UniProtKB"/>
</dbReference>
<dbReference type="GO" id="GO:0007029">
    <property type="term" value="P:endoplasmic reticulum organization"/>
    <property type="evidence" value="ECO:0000250"/>
    <property type="project" value="UniProtKB"/>
</dbReference>
<dbReference type="GO" id="GO:0008286">
    <property type="term" value="P:insulin receptor signaling pathway"/>
    <property type="evidence" value="ECO:0007669"/>
    <property type="project" value="TreeGrafter"/>
</dbReference>
<dbReference type="GO" id="GO:0007005">
    <property type="term" value="P:mitochondrion organization"/>
    <property type="evidence" value="ECO:0000250"/>
    <property type="project" value="UniProtKB"/>
</dbReference>
<dbReference type="GO" id="GO:0001937">
    <property type="term" value="P:negative regulation of endothelial cell proliferation"/>
    <property type="evidence" value="ECO:0000250"/>
    <property type="project" value="UniProtKB"/>
</dbReference>
<dbReference type="GO" id="GO:0060161">
    <property type="term" value="P:positive regulation of dopamine receptor signaling pathway"/>
    <property type="evidence" value="ECO:0000250"/>
    <property type="project" value="UniProtKB"/>
</dbReference>
<dbReference type="GO" id="GO:0051480">
    <property type="term" value="P:regulation of cytosolic calcium ion concentration"/>
    <property type="evidence" value="ECO:0007669"/>
    <property type="project" value="TreeGrafter"/>
</dbReference>
<dbReference type="GO" id="GO:0048741">
    <property type="term" value="P:skeletal muscle fiber development"/>
    <property type="evidence" value="ECO:0000250"/>
    <property type="project" value="UniProtKB"/>
</dbReference>
<dbReference type="GO" id="GO:0048278">
    <property type="term" value="P:vesicle docking"/>
    <property type="evidence" value="ECO:0000250"/>
    <property type="project" value="UniProtKB"/>
</dbReference>
<dbReference type="GO" id="GO:0006906">
    <property type="term" value="P:vesicle fusion"/>
    <property type="evidence" value="ECO:0000250"/>
    <property type="project" value="UniProtKB"/>
</dbReference>
<dbReference type="InterPro" id="IPR001612">
    <property type="entry name" value="Caveolin"/>
</dbReference>
<dbReference type="InterPro" id="IPR018361">
    <property type="entry name" value="Caveolin_CS"/>
</dbReference>
<dbReference type="PANTHER" id="PTHR10844">
    <property type="entry name" value="CAVEOLIN"/>
    <property type="match status" value="1"/>
</dbReference>
<dbReference type="PANTHER" id="PTHR10844:SF3">
    <property type="entry name" value="CAVEOLIN-2"/>
    <property type="match status" value="1"/>
</dbReference>
<dbReference type="Pfam" id="PF01146">
    <property type="entry name" value="Caveolin"/>
    <property type="match status" value="1"/>
</dbReference>
<dbReference type="PROSITE" id="PS01210">
    <property type="entry name" value="CAVEOLIN"/>
    <property type="match status" value="1"/>
</dbReference>